<evidence type="ECO:0000255" key="1">
    <source>
        <dbReference type="HAMAP-Rule" id="MF_00049"/>
    </source>
</evidence>
<dbReference type="EC" id="6.1.1.4" evidence="1"/>
<dbReference type="EMBL" id="AP007281">
    <property type="protein sequence ID" value="BAG25744.1"/>
    <property type="molecule type" value="Genomic_DNA"/>
</dbReference>
<dbReference type="RefSeq" id="WP_003668546.1">
    <property type="nucleotide sequence ID" value="NC_010609.1"/>
</dbReference>
<dbReference type="SMR" id="B2G8G2"/>
<dbReference type="KEGG" id="lrf:LAR_1228"/>
<dbReference type="HOGENOM" id="CLU_004427_0_0_9"/>
<dbReference type="GO" id="GO:0005829">
    <property type="term" value="C:cytosol"/>
    <property type="evidence" value="ECO:0007669"/>
    <property type="project" value="TreeGrafter"/>
</dbReference>
<dbReference type="GO" id="GO:0002161">
    <property type="term" value="F:aminoacyl-tRNA deacylase activity"/>
    <property type="evidence" value="ECO:0007669"/>
    <property type="project" value="InterPro"/>
</dbReference>
<dbReference type="GO" id="GO:0005524">
    <property type="term" value="F:ATP binding"/>
    <property type="evidence" value="ECO:0007669"/>
    <property type="project" value="UniProtKB-UniRule"/>
</dbReference>
<dbReference type="GO" id="GO:0004823">
    <property type="term" value="F:leucine-tRNA ligase activity"/>
    <property type="evidence" value="ECO:0007669"/>
    <property type="project" value="UniProtKB-UniRule"/>
</dbReference>
<dbReference type="GO" id="GO:0006429">
    <property type="term" value="P:leucyl-tRNA aminoacylation"/>
    <property type="evidence" value="ECO:0007669"/>
    <property type="project" value="UniProtKB-UniRule"/>
</dbReference>
<dbReference type="CDD" id="cd07958">
    <property type="entry name" value="Anticodon_Ia_Leu_BEm"/>
    <property type="match status" value="1"/>
</dbReference>
<dbReference type="CDD" id="cd00812">
    <property type="entry name" value="LeuRS_core"/>
    <property type="match status" value="1"/>
</dbReference>
<dbReference type="FunFam" id="3.10.20.590:FF:000001">
    <property type="entry name" value="Leucine--tRNA ligase"/>
    <property type="match status" value="1"/>
</dbReference>
<dbReference type="FunFam" id="3.40.50.620:FF:000056">
    <property type="entry name" value="Leucine--tRNA ligase"/>
    <property type="match status" value="1"/>
</dbReference>
<dbReference type="FunFam" id="3.40.50.620:FF:000077">
    <property type="entry name" value="Leucine--tRNA ligase"/>
    <property type="match status" value="1"/>
</dbReference>
<dbReference type="FunFam" id="1.10.730.10:FF:000011">
    <property type="entry name" value="Leucine--tRNA ligase chloroplastic/mitochondrial"/>
    <property type="match status" value="1"/>
</dbReference>
<dbReference type="Gene3D" id="3.10.20.590">
    <property type="match status" value="1"/>
</dbReference>
<dbReference type="Gene3D" id="3.40.50.620">
    <property type="entry name" value="HUPs"/>
    <property type="match status" value="2"/>
</dbReference>
<dbReference type="Gene3D" id="1.10.730.10">
    <property type="entry name" value="Isoleucyl-tRNA Synthetase, Domain 1"/>
    <property type="match status" value="1"/>
</dbReference>
<dbReference type="HAMAP" id="MF_00049_B">
    <property type="entry name" value="Leu_tRNA_synth_B"/>
    <property type="match status" value="1"/>
</dbReference>
<dbReference type="InterPro" id="IPR001412">
    <property type="entry name" value="aa-tRNA-synth_I_CS"/>
</dbReference>
<dbReference type="InterPro" id="IPR002300">
    <property type="entry name" value="aa-tRNA-synth_Ia"/>
</dbReference>
<dbReference type="InterPro" id="IPR002302">
    <property type="entry name" value="Leu-tRNA-ligase"/>
</dbReference>
<dbReference type="InterPro" id="IPR025709">
    <property type="entry name" value="Leu_tRNA-synth_edit"/>
</dbReference>
<dbReference type="InterPro" id="IPR013155">
    <property type="entry name" value="M/V/L/I-tRNA-synth_anticd-bd"/>
</dbReference>
<dbReference type="InterPro" id="IPR015413">
    <property type="entry name" value="Methionyl/Leucyl_tRNA_Synth"/>
</dbReference>
<dbReference type="InterPro" id="IPR014729">
    <property type="entry name" value="Rossmann-like_a/b/a_fold"/>
</dbReference>
<dbReference type="InterPro" id="IPR009080">
    <property type="entry name" value="tRNAsynth_Ia_anticodon-bd"/>
</dbReference>
<dbReference type="InterPro" id="IPR009008">
    <property type="entry name" value="Val/Leu/Ile-tRNA-synth_edit"/>
</dbReference>
<dbReference type="NCBIfam" id="TIGR00396">
    <property type="entry name" value="leuS_bact"/>
    <property type="match status" value="1"/>
</dbReference>
<dbReference type="PANTHER" id="PTHR43740:SF2">
    <property type="entry name" value="LEUCINE--TRNA LIGASE, MITOCHONDRIAL"/>
    <property type="match status" value="1"/>
</dbReference>
<dbReference type="PANTHER" id="PTHR43740">
    <property type="entry name" value="LEUCYL-TRNA SYNTHETASE"/>
    <property type="match status" value="1"/>
</dbReference>
<dbReference type="Pfam" id="PF08264">
    <property type="entry name" value="Anticodon_1"/>
    <property type="match status" value="1"/>
</dbReference>
<dbReference type="Pfam" id="PF00133">
    <property type="entry name" value="tRNA-synt_1"/>
    <property type="match status" value="1"/>
</dbReference>
<dbReference type="Pfam" id="PF13603">
    <property type="entry name" value="tRNA-synt_1_2"/>
    <property type="match status" value="1"/>
</dbReference>
<dbReference type="Pfam" id="PF09334">
    <property type="entry name" value="tRNA-synt_1g"/>
    <property type="match status" value="1"/>
</dbReference>
<dbReference type="PRINTS" id="PR00985">
    <property type="entry name" value="TRNASYNTHLEU"/>
</dbReference>
<dbReference type="SUPFAM" id="SSF47323">
    <property type="entry name" value="Anticodon-binding domain of a subclass of class I aminoacyl-tRNA synthetases"/>
    <property type="match status" value="1"/>
</dbReference>
<dbReference type="SUPFAM" id="SSF52374">
    <property type="entry name" value="Nucleotidylyl transferase"/>
    <property type="match status" value="1"/>
</dbReference>
<dbReference type="SUPFAM" id="SSF50677">
    <property type="entry name" value="ValRS/IleRS/LeuRS editing domain"/>
    <property type="match status" value="1"/>
</dbReference>
<dbReference type="PROSITE" id="PS00178">
    <property type="entry name" value="AA_TRNA_LIGASE_I"/>
    <property type="match status" value="1"/>
</dbReference>
<proteinExistence type="inferred from homology"/>
<sequence>MAYDHKTIEKKWQKFWKKNETFKADLNKDQKKYYALDMFPYPSGQGLHVGHPEGYTATDVMSRMKRMQGFNVLHPMGWDAFGLPAEQYALKTGHNPKDFTNKNIDHFRDQIQSLGFSYDWDREVNTTDPKFYKWTQWIFEQLYKKGLAYESEIMVNWAPDFMGGTVVANEEVEDGKTKRGGYPVYRKPMRQWVLKITAYADRLIDDLDLVDWPESVKEMQRNWIGRSEGASVFFPVVGDEDTKIEVFTTRADTLFGASYVVLAPEQELVDQLTTPEHKAEVEKYKEEASRRSDLERTDLNKDKTGVFTGSYVINPVNGEKLPIWISDYVLASYGTGAVMAVPSGDQRDYDFATKFNLPIKPIIEGADISEGAFDGDGKHINSGFLDGLNIADAKQKMIDWLEEHDAGHKKVNYRLRDWIFSRQRYWGEPIPVIHWDDGTTSLVPEDELPLELPKTDNIEPSGTGESPLANVEDWVNVYDENGRHGLRETNTMPQWAGSSWYWLRYTDPHNDEEFASKEALDYWSPVDLYVGGAEHAVLHLLYARFWHKVLYDLGLVPTKEPFMKLVNQGMILGSNHEKMSKSKGNVVNPDDIVDQYGADTLRLYEMFMGPLEESVPWDEKGLHGANKWVQRVWRLLMDDNNHLRDRVSTFNDGKLTKVYNQTVKKVTEDYERMHFNTAISQLMVFVNEAYKVDDLPVEYMKGFVKMIAPIMPHMAEELWSQFGESDTITYQPWPTYDPKALVEDEVEMIVQVNGKVRAKIKMAKDTDRDEAQQLALANEHVKKFTDGKDIKKVIVVPNKIVNIVAK</sequence>
<reference key="1">
    <citation type="journal article" date="2008" name="DNA Res.">
        <title>Comparative genome analysis of Lactobacillus reuteri and Lactobacillus fermentum reveal a genomic island for reuterin and cobalamin production.</title>
        <authorList>
            <person name="Morita H."/>
            <person name="Toh H."/>
            <person name="Fukuda S."/>
            <person name="Horikawa H."/>
            <person name="Oshima K."/>
            <person name="Suzuki T."/>
            <person name="Murakami M."/>
            <person name="Hisamatsu S."/>
            <person name="Kato Y."/>
            <person name="Takizawa T."/>
            <person name="Fukuoka H."/>
            <person name="Yoshimura T."/>
            <person name="Itoh K."/>
            <person name="O'Sullivan D.J."/>
            <person name="McKay L.L."/>
            <person name="Ohno H."/>
            <person name="Kikuchi J."/>
            <person name="Masaoka T."/>
            <person name="Hattori M."/>
        </authorList>
    </citation>
    <scope>NUCLEOTIDE SEQUENCE [LARGE SCALE GENOMIC DNA]</scope>
    <source>
        <strain>JCM 1112</strain>
    </source>
</reference>
<gene>
    <name evidence="1" type="primary">leuS</name>
    <name type="ordered locus">LAR_1228</name>
</gene>
<keyword id="KW-0030">Aminoacyl-tRNA synthetase</keyword>
<keyword id="KW-0067">ATP-binding</keyword>
<keyword id="KW-0963">Cytoplasm</keyword>
<keyword id="KW-0436">Ligase</keyword>
<keyword id="KW-0547">Nucleotide-binding</keyword>
<keyword id="KW-0648">Protein biosynthesis</keyword>
<accession>B2G8G2</accession>
<organism>
    <name type="scientific">Limosilactobacillus reuteri subsp. reuteri (strain JCM 1112)</name>
    <name type="common">Lactobacillus reuteri</name>
    <dbReference type="NCBI Taxonomy" id="557433"/>
    <lineage>
        <taxon>Bacteria</taxon>
        <taxon>Bacillati</taxon>
        <taxon>Bacillota</taxon>
        <taxon>Bacilli</taxon>
        <taxon>Lactobacillales</taxon>
        <taxon>Lactobacillaceae</taxon>
        <taxon>Limosilactobacillus</taxon>
    </lineage>
</organism>
<name>SYL_LIMRJ</name>
<feature type="chain" id="PRO_1000091330" description="Leucine--tRNA ligase">
    <location>
        <begin position="1"/>
        <end position="806"/>
    </location>
</feature>
<feature type="short sequence motif" description="'HIGH' region">
    <location>
        <begin position="40"/>
        <end position="51"/>
    </location>
</feature>
<feature type="short sequence motif" description="'KMSKS' region">
    <location>
        <begin position="578"/>
        <end position="582"/>
    </location>
</feature>
<feature type="binding site" evidence="1">
    <location>
        <position position="581"/>
    </location>
    <ligand>
        <name>ATP</name>
        <dbReference type="ChEBI" id="CHEBI:30616"/>
    </ligand>
</feature>
<protein>
    <recommendedName>
        <fullName evidence="1">Leucine--tRNA ligase</fullName>
        <ecNumber evidence="1">6.1.1.4</ecNumber>
    </recommendedName>
    <alternativeName>
        <fullName evidence="1">Leucyl-tRNA synthetase</fullName>
        <shortName evidence="1">LeuRS</shortName>
    </alternativeName>
</protein>
<comment type="catalytic activity">
    <reaction evidence="1">
        <text>tRNA(Leu) + L-leucine + ATP = L-leucyl-tRNA(Leu) + AMP + diphosphate</text>
        <dbReference type="Rhea" id="RHEA:11688"/>
        <dbReference type="Rhea" id="RHEA-COMP:9613"/>
        <dbReference type="Rhea" id="RHEA-COMP:9622"/>
        <dbReference type="ChEBI" id="CHEBI:30616"/>
        <dbReference type="ChEBI" id="CHEBI:33019"/>
        <dbReference type="ChEBI" id="CHEBI:57427"/>
        <dbReference type="ChEBI" id="CHEBI:78442"/>
        <dbReference type="ChEBI" id="CHEBI:78494"/>
        <dbReference type="ChEBI" id="CHEBI:456215"/>
        <dbReference type="EC" id="6.1.1.4"/>
    </reaction>
</comment>
<comment type="subcellular location">
    <subcellularLocation>
        <location evidence="1">Cytoplasm</location>
    </subcellularLocation>
</comment>
<comment type="similarity">
    <text evidence="1">Belongs to the class-I aminoacyl-tRNA synthetase family.</text>
</comment>